<gene>
    <name type="primary">RTBDN</name>
</gene>
<name>RTBDN_CANLF</name>
<feature type="signal peptide" evidence="3">
    <location>
        <begin position="1"/>
        <end position="30"/>
    </location>
</feature>
<feature type="chain" id="PRO_0000043173" description="Retbindin">
    <location>
        <begin position="31"/>
        <end position="223"/>
    </location>
</feature>
<feature type="disulfide bond" evidence="1">
    <location>
        <begin position="73"/>
        <end position="143"/>
    </location>
</feature>
<feature type="disulfide bond" evidence="1">
    <location>
        <begin position="80"/>
        <end position="120"/>
    </location>
</feature>
<feature type="disulfide bond" evidence="1">
    <location>
        <begin position="113"/>
        <end position="157"/>
    </location>
</feature>
<feature type="disulfide bond" evidence="1">
    <location>
        <begin position="126"/>
        <end position="139"/>
    </location>
</feature>
<comment type="function">
    <text evidence="2">Riboflavin-binding protein which might have a role in retinal flavin transport.</text>
</comment>
<comment type="subcellular location">
    <subcellularLocation>
        <location evidence="2">Secreted</location>
        <location evidence="2">Extracellular space</location>
        <location evidence="2">Extracellular matrix</location>
        <location evidence="2">Interphotoreceptor matrix</location>
    </subcellularLocation>
    <subcellularLocation>
        <location>Cell membrane</location>
        <topology evidence="2">Peripheral membrane protein</topology>
    </subcellularLocation>
</comment>
<comment type="PTM">
    <text evidence="2">Not N-glycosylated.</text>
</comment>
<comment type="similarity">
    <text evidence="4">Belongs to the folate receptor family.</text>
</comment>
<keyword id="KW-1003">Cell membrane</keyword>
<keyword id="KW-1015">Disulfide bond</keyword>
<keyword id="KW-0272">Extracellular matrix</keyword>
<keyword id="KW-0472">Membrane</keyword>
<keyword id="KW-1185">Reference proteome</keyword>
<keyword id="KW-0964">Secreted</keyword>
<keyword id="KW-0732">Signal</keyword>
<reference key="1">
    <citation type="submission" date="2005-05" db="EMBL/GenBank/DDBJ databases">
        <authorList>
            <person name="Wistow G."/>
        </authorList>
    </citation>
    <scope>NUCLEOTIDE SEQUENCE [MRNA]</scope>
    <source>
        <tissue>Retina</tissue>
    </source>
</reference>
<evidence type="ECO:0000250" key="1">
    <source>
        <dbReference type="UniProtKB" id="P15328"/>
    </source>
</evidence>
<evidence type="ECO:0000250" key="2">
    <source>
        <dbReference type="UniProtKB" id="Q8QZY4"/>
    </source>
</evidence>
<evidence type="ECO:0000255" key="3"/>
<evidence type="ECO:0000305" key="4"/>
<sequence length="223" mass="23859">MANRGHTQPRALAWALGLTLVWILLGACGGSRPLPALSRRHHRLAADLGTGQLHLAEMDTPEASGPGMVSEHCGKPSPGCESFLGHLQVALHNRFRLLLLGIRQAQPLCSELCDIWFATCESDITCGPTWLPLLEKRGCEPRCTTYEQTFADGADLCRSVLGYALPVAAPGADHCLNISISVLPGSRQERKAQEVTFPRSRRSRTWILDAPGSGSGSGSGSGP</sequence>
<accession>Q4TUC0</accession>
<organism>
    <name type="scientific">Canis lupus familiaris</name>
    <name type="common">Dog</name>
    <name type="synonym">Canis familiaris</name>
    <dbReference type="NCBI Taxonomy" id="9615"/>
    <lineage>
        <taxon>Eukaryota</taxon>
        <taxon>Metazoa</taxon>
        <taxon>Chordata</taxon>
        <taxon>Craniata</taxon>
        <taxon>Vertebrata</taxon>
        <taxon>Euteleostomi</taxon>
        <taxon>Mammalia</taxon>
        <taxon>Eutheria</taxon>
        <taxon>Laurasiatheria</taxon>
        <taxon>Carnivora</taxon>
        <taxon>Caniformia</taxon>
        <taxon>Canidae</taxon>
        <taxon>Canis</taxon>
    </lineage>
</organism>
<dbReference type="EMBL" id="DQ058011">
    <property type="protein sequence ID" value="AAY57282.1"/>
    <property type="molecule type" value="mRNA"/>
</dbReference>
<dbReference type="RefSeq" id="NP_001020132.1">
    <property type="nucleotide sequence ID" value="NM_001024961.1"/>
</dbReference>
<dbReference type="RefSeq" id="XP_005632379.1">
    <property type="nucleotide sequence ID" value="XM_005632322.2"/>
</dbReference>
<dbReference type="RefSeq" id="XP_005632380.1">
    <property type="nucleotide sequence ID" value="XM_005632323.2"/>
</dbReference>
<dbReference type="RefSeq" id="XP_013977209.1">
    <property type="nucleotide sequence ID" value="XM_014121734.1"/>
</dbReference>
<dbReference type="RefSeq" id="XP_038282364.1">
    <property type="nucleotide sequence ID" value="XM_038426436.1"/>
</dbReference>
<dbReference type="RefSeq" id="XP_038282365.1">
    <property type="nucleotide sequence ID" value="XM_038426437.1"/>
</dbReference>
<dbReference type="RefSeq" id="XP_038282366.1">
    <property type="nucleotide sequence ID" value="XM_038426438.1"/>
</dbReference>
<dbReference type="SMR" id="Q4TUC0"/>
<dbReference type="STRING" id="9615.ENSCAFP00000025269"/>
<dbReference type="PaxDb" id="9612-ENSCAFP00000025269"/>
<dbReference type="Ensembl" id="ENSCAFT00000027169.5">
    <property type="protein sequence ID" value="ENSCAFP00000025269.4"/>
    <property type="gene ID" value="ENSCAFG00000017154.6"/>
</dbReference>
<dbReference type="Ensembl" id="ENSCAFT00030035359.1">
    <property type="protein sequence ID" value="ENSCAFP00030030839.1"/>
    <property type="gene ID" value="ENSCAFG00030019215.1"/>
</dbReference>
<dbReference type="Ensembl" id="ENSCAFT00040044490.1">
    <property type="protein sequence ID" value="ENSCAFP00040038852.1"/>
    <property type="gene ID" value="ENSCAFG00040023897.1"/>
</dbReference>
<dbReference type="Ensembl" id="ENSCAFT00845028091.1">
    <property type="protein sequence ID" value="ENSCAFP00845022103.1"/>
    <property type="gene ID" value="ENSCAFG00845015774.1"/>
</dbReference>
<dbReference type="GeneID" id="476698"/>
<dbReference type="KEGG" id="cfa:476698"/>
<dbReference type="CTD" id="83546"/>
<dbReference type="VEuPathDB" id="HostDB:ENSCAFG00845015774"/>
<dbReference type="VGNC" id="VGNC:45786">
    <property type="gene designation" value="RTBDN"/>
</dbReference>
<dbReference type="eggNOG" id="ENOG502RYYP">
    <property type="taxonomic scope" value="Eukaryota"/>
</dbReference>
<dbReference type="GeneTree" id="ENSGT00950000183144"/>
<dbReference type="HOGENOM" id="CLU_081745_0_0_1"/>
<dbReference type="InParanoid" id="Q4TUC0"/>
<dbReference type="OrthoDB" id="5982417at2759"/>
<dbReference type="Proteomes" id="UP000002254">
    <property type="component" value="Chromosome 20"/>
</dbReference>
<dbReference type="Proteomes" id="UP000694429">
    <property type="component" value="Chromosome 20"/>
</dbReference>
<dbReference type="Proteomes" id="UP000694542">
    <property type="component" value="Chromosome 20"/>
</dbReference>
<dbReference type="Proteomes" id="UP000805418">
    <property type="component" value="Chromosome 20"/>
</dbReference>
<dbReference type="Bgee" id="ENSCAFG00000017154">
    <property type="expression patterns" value="Expressed in jejunum and 6 other cell types or tissues"/>
</dbReference>
<dbReference type="GO" id="GO:0009897">
    <property type="term" value="C:external side of plasma membrane"/>
    <property type="evidence" value="ECO:0000318"/>
    <property type="project" value="GO_Central"/>
</dbReference>
<dbReference type="GO" id="GO:0005576">
    <property type="term" value="C:extracellular region"/>
    <property type="evidence" value="ECO:0007669"/>
    <property type="project" value="UniProtKB-KW"/>
</dbReference>
<dbReference type="GO" id="GO:0033165">
    <property type="term" value="C:interphotoreceptor matrix"/>
    <property type="evidence" value="ECO:0007669"/>
    <property type="project" value="UniProtKB-SubCell"/>
</dbReference>
<dbReference type="GO" id="GO:1902444">
    <property type="term" value="F:riboflavin binding"/>
    <property type="evidence" value="ECO:0000318"/>
    <property type="project" value="GO_Central"/>
</dbReference>
<dbReference type="GO" id="GO:0032217">
    <property type="term" value="F:riboflavin transmembrane transporter activity"/>
    <property type="evidence" value="ECO:0000318"/>
    <property type="project" value="GO_Central"/>
</dbReference>
<dbReference type="GO" id="GO:0038023">
    <property type="term" value="F:signaling receptor activity"/>
    <property type="evidence" value="ECO:0000318"/>
    <property type="project" value="GO_Central"/>
</dbReference>
<dbReference type="InterPro" id="IPR004269">
    <property type="entry name" value="Folate_rcpt"/>
</dbReference>
<dbReference type="InterPro" id="IPR018143">
    <property type="entry name" value="Folate_rcpt-like"/>
</dbReference>
<dbReference type="PANTHER" id="PTHR10517">
    <property type="entry name" value="FOLATE RECEPTOR"/>
    <property type="match status" value="1"/>
</dbReference>
<dbReference type="PANTHER" id="PTHR10517:SF19">
    <property type="entry name" value="RETBINDIN"/>
    <property type="match status" value="1"/>
</dbReference>
<dbReference type="Pfam" id="PF03024">
    <property type="entry name" value="Folate_rec"/>
    <property type="match status" value="1"/>
</dbReference>
<protein>
    <recommendedName>
        <fullName>Retbindin</fullName>
    </recommendedName>
</protein>
<proteinExistence type="evidence at transcript level"/>